<evidence type="ECO:0000255" key="1">
    <source>
        <dbReference type="HAMAP-Rule" id="MF_00514"/>
    </source>
</evidence>
<evidence type="ECO:0000256" key="2">
    <source>
        <dbReference type="SAM" id="MobiDB-lite"/>
    </source>
</evidence>
<evidence type="ECO:0000305" key="3"/>
<dbReference type="EMBL" id="CP001615">
    <property type="protein sequence ID" value="ACQ69578.1"/>
    <property type="molecule type" value="Genomic_DNA"/>
</dbReference>
<dbReference type="RefSeq" id="WP_012726697.1">
    <property type="nucleotide sequence ID" value="NZ_MOEL01000008.1"/>
</dbReference>
<dbReference type="SMR" id="C4L456"/>
<dbReference type="STRING" id="360911.EAT1b_0647"/>
<dbReference type="GeneID" id="94371739"/>
<dbReference type="KEGG" id="eat:EAT1b_0647"/>
<dbReference type="eggNOG" id="COG0291">
    <property type="taxonomic scope" value="Bacteria"/>
</dbReference>
<dbReference type="HOGENOM" id="CLU_169643_3_0_9"/>
<dbReference type="OrthoDB" id="47476at2"/>
<dbReference type="Proteomes" id="UP000000716">
    <property type="component" value="Chromosome"/>
</dbReference>
<dbReference type="GO" id="GO:0022625">
    <property type="term" value="C:cytosolic large ribosomal subunit"/>
    <property type="evidence" value="ECO:0007669"/>
    <property type="project" value="TreeGrafter"/>
</dbReference>
<dbReference type="GO" id="GO:0003735">
    <property type="term" value="F:structural constituent of ribosome"/>
    <property type="evidence" value="ECO:0007669"/>
    <property type="project" value="InterPro"/>
</dbReference>
<dbReference type="GO" id="GO:0006412">
    <property type="term" value="P:translation"/>
    <property type="evidence" value="ECO:0007669"/>
    <property type="project" value="UniProtKB-UniRule"/>
</dbReference>
<dbReference type="FunFam" id="4.10.410.60:FF:000001">
    <property type="entry name" value="50S ribosomal protein L35"/>
    <property type="match status" value="1"/>
</dbReference>
<dbReference type="Gene3D" id="4.10.410.60">
    <property type="match status" value="1"/>
</dbReference>
<dbReference type="HAMAP" id="MF_00514">
    <property type="entry name" value="Ribosomal_bL35"/>
    <property type="match status" value="1"/>
</dbReference>
<dbReference type="InterPro" id="IPR001706">
    <property type="entry name" value="Ribosomal_bL35"/>
</dbReference>
<dbReference type="InterPro" id="IPR021137">
    <property type="entry name" value="Ribosomal_bL35-like"/>
</dbReference>
<dbReference type="InterPro" id="IPR018265">
    <property type="entry name" value="Ribosomal_bL35_CS"/>
</dbReference>
<dbReference type="InterPro" id="IPR037229">
    <property type="entry name" value="Ribosomal_bL35_sf"/>
</dbReference>
<dbReference type="NCBIfam" id="TIGR00001">
    <property type="entry name" value="rpmI_bact"/>
    <property type="match status" value="1"/>
</dbReference>
<dbReference type="PANTHER" id="PTHR33343">
    <property type="entry name" value="54S RIBOSOMAL PROTEIN BL35M"/>
    <property type="match status" value="1"/>
</dbReference>
<dbReference type="PANTHER" id="PTHR33343:SF1">
    <property type="entry name" value="LARGE RIBOSOMAL SUBUNIT PROTEIN BL35M"/>
    <property type="match status" value="1"/>
</dbReference>
<dbReference type="Pfam" id="PF01632">
    <property type="entry name" value="Ribosomal_L35p"/>
    <property type="match status" value="1"/>
</dbReference>
<dbReference type="PRINTS" id="PR00064">
    <property type="entry name" value="RIBOSOMALL35"/>
</dbReference>
<dbReference type="SUPFAM" id="SSF143034">
    <property type="entry name" value="L35p-like"/>
    <property type="match status" value="1"/>
</dbReference>
<dbReference type="PROSITE" id="PS00936">
    <property type="entry name" value="RIBOSOMAL_L35"/>
    <property type="match status" value="1"/>
</dbReference>
<organism>
    <name type="scientific">Exiguobacterium sp. (strain ATCC BAA-1283 / AT1b)</name>
    <dbReference type="NCBI Taxonomy" id="360911"/>
    <lineage>
        <taxon>Bacteria</taxon>
        <taxon>Bacillati</taxon>
        <taxon>Bacillota</taxon>
        <taxon>Bacilli</taxon>
        <taxon>Bacillales</taxon>
        <taxon>Bacillales Family XII. Incertae Sedis</taxon>
        <taxon>Exiguobacterium</taxon>
    </lineage>
</organism>
<keyword id="KW-0687">Ribonucleoprotein</keyword>
<keyword id="KW-0689">Ribosomal protein</keyword>
<name>RL35_EXISA</name>
<reference key="1">
    <citation type="journal article" date="2011" name="J. Bacteriol.">
        <title>Complete genome sequence of the Thermophilic Bacterium Exiguobacterium sp. AT1b.</title>
        <authorList>
            <person name="Vishnivetskaya T.A."/>
            <person name="Lucas S."/>
            <person name="Copeland A."/>
            <person name="Lapidus A."/>
            <person name="Glavina del Rio T."/>
            <person name="Dalin E."/>
            <person name="Tice H."/>
            <person name="Bruce D.C."/>
            <person name="Goodwin L.A."/>
            <person name="Pitluck S."/>
            <person name="Saunders E."/>
            <person name="Brettin T."/>
            <person name="Detter C."/>
            <person name="Han C."/>
            <person name="Larimer F."/>
            <person name="Land M.L."/>
            <person name="Hauser L.J."/>
            <person name="Kyrpides N.C."/>
            <person name="Ovchinnikova G."/>
            <person name="Kathariou S."/>
            <person name="Ramaley R.F."/>
            <person name="Rodrigues D.F."/>
            <person name="Hendrix C."/>
            <person name="Richardson P."/>
            <person name="Tiedje J.M."/>
        </authorList>
    </citation>
    <scope>NUCLEOTIDE SEQUENCE [LARGE SCALE GENOMIC DNA]</scope>
    <source>
        <strain>ATCC BAA-1283 / AT1b</strain>
    </source>
</reference>
<comment type="similarity">
    <text evidence="1">Belongs to the bacterial ribosomal protein bL35 family.</text>
</comment>
<accession>C4L456</accession>
<gene>
    <name evidence="1" type="primary">rpmI</name>
    <name type="ordered locus">EAT1b_0647</name>
</gene>
<protein>
    <recommendedName>
        <fullName evidence="1">Large ribosomal subunit protein bL35</fullName>
    </recommendedName>
    <alternativeName>
        <fullName evidence="3">50S ribosomal protein L35</fullName>
    </alternativeName>
</protein>
<proteinExistence type="inferred from homology"/>
<sequence length="64" mass="7272">MPKMKSHRGASKRFKRTASGKLKRSHAYTSHLFANKSTKAKRKLRKGAIVSAGDFKRIRNMIAK</sequence>
<feature type="chain" id="PRO_1000211703" description="Large ribosomal subunit protein bL35">
    <location>
        <begin position="1"/>
        <end position="64"/>
    </location>
</feature>
<feature type="region of interest" description="Disordered" evidence="2">
    <location>
        <begin position="1"/>
        <end position="42"/>
    </location>
</feature>
<feature type="compositionally biased region" description="Basic residues" evidence="2">
    <location>
        <begin position="1"/>
        <end position="26"/>
    </location>
</feature>